<dbReference type="EMBL" id="BA000033">
    <property type="protein sequence ID" value="BAB95949.1"/>
    <property type="molecule type" value="Genomic_DNA"/>
</dbReference>
<dbReference type="RefSeq" id="WP_001292149.1">
    <property type="nucleotide sequence ID" value="NC_003923.1"/>
</dbReference>
<dbReference type="SMR" id="P0A0D9"/>
<dbReference type="KEGG" id="sam:MW2084"/>
<dbReference type="HOGENOM" id="CLU_072531_3_0_9"/>
<dbReference type="GO" id="GO:0005737">
    <property type="term" value="C:cytoplasm"/>
    <property type="evidence" value="ECO:0007669"/>
    <property type="project" value="UniProtKB-SubCell"/>
</dbReference>
<dbReference type="GO" id="GO:0005886">
    <property type="term" value="C:plasma membrane"/>
    <property type="evidence" value="ECO:0007669"/>
    <property type="project" value="TreeGrafter"/>
</dbReference>
<dbReference type="GO" id="GO:0016301">
    <property type="term" value="F:kinase activity"/>
    <property type="evidence" value="ECO:0007669"/>
    <property type="project" value="UniProtKB-KW"/>
</dbReference>
<dbReference type="GO" id="GO:0090563">
    <property type="term" value="F:protein-phosphocysteine-sugar phosphotransferase activity"/>
    <property type="evidence" value="ECO:0007669"/>
    <property type="project" value="TreeGrafter"/>
</dbReference>
<dbReference type="GO" id="GO:0009401">
    <property type="term" value="P:phosphoenolpyruvate-dependent sugar phosphotransferase system"/>
    <property type="evidence" value="ECO:0007669"/>
    <property type="project" value="UniProtKB-KW"/>
</dbReference>
<dbReference type="CDD" id="cd00211">
    <property type="entry name" value="PTS_IIA_fru"/>
    <property type="match status" value="1"/>
</dbReference>
<dbReference type="Gene3D" id="3.40.930.10">
    <property type="entry name" value="Mannitol-specific EII, Chain A"/>
    <property type="match status" value="1"/>
</dbReference>
<dbReference type="InterPro" id="IPR016152">
    <property type="entry name" value="PTrfase/Anion_transptr"/>
</dbReference>
<dbReference type="InterPro" id="IPR002178">
    <property type="entry name" value="PTS_EIIA_type-2_dom"/>
</dbReference>
<dbReference type="InterPro" id="IPR050893">
    <property type="entry name" value="Sugar_PTS"/>
</dbReference>
<dbReference type="PANTHER" id="PTHR30181">
    <property type="entry name" value="MANNITOL PERMEASE IIC COMPONENT"/>
    <property type="match status" value="1"/>
</dbReference>
<dbReference type="PANTHER" id="PTHR30181:SF2">
    <property type="entry name" value="PTS SYSTEM MANNITOL-SPECIFIC EIICBA COMPONENT"/>
    <property type="match status" value="1"/>
</dbReference>
<dbReference type="Pfam" id="PF00359">
    <property type="entry name" value="PTS_EIIA_2"/>
    <property type="match status" value="1"/>
</dbReference>
<dbReference type="SUPFAM" id="SSF55804">
    <property type="entry name" value="Phoshotransferase/anion transport protein"/>
    <property type="match status" value="1"/>
</dbReference>
<dbReference type="PROSITE" id="PS51094">
    <property type="entry name" value="PTS_EIIA_TYPE_2"/>
    <property type="match status" value="1"/>
</dbReference>
<dbReference type="PROSITE" id="PS00372">
    <property type="entry name" value="PTS_EIIA_TYPE_2_HIS"/>
    <property type="match status" value="1"/>
</dbReference>
<accession>P0A0D9</accession>
<accession>P17875</accession>
<accession>Q9RL67</accession>
<protein>
    <recommendedName>
        <fullName evidence="3">Mannitol-specific phosphotransferase enzyme IIA component</fullName>
    </recommendedName>
    <alternativeName>
        <fullName evidence="3">EIIA</fullName>
    </alternativeName>
    <alternativeName>
        <fullName evidence="3">EIII</fullName>
    </alternativeName>
    <alternativeName>
        <fullName evidence="3">PTS system mannitol-specific EIIA component</fullName>
    </alternativeName>
</protein>
<gene>
    <name type="primary">mtlF</name>
    <name type="synonym">mtlA</name>
    <name type="ordered locus">MW2084</name>
</gene>
<feature type="initiator methionine" description="Removed" evidence="1">
    <location>
        <position position="1"/>
    </location>
</feature>
<feature type="chain" id="PRO_0000186641" description="Mannitol-specific phosphotransferase enzyme IIA component">
    <location>
        <begin position="2"/>
        <end position="144"/>
    </location>
</feature>
<feature type="domain" description="PTS EIIA type-2" evidence="4">
    <location>
        <begin position="3"/>
        <end position="142"/>
    </location>
</feature>
<feature type="active site" description="Tele-phosphohistidine intermediate" evidence="3 4">
    <location>
        <position position="63"/>
    </location>
</feature>
<feature type="modified residue" description="Phosphohistidine; by HPr" evidence="2 3">
    <location>
        <position position="63"/>
    </location>
</feature>
<proteinExistence type="inferred from homology"/>
<organism>
    <name type="scientific">Staphylococcus aureus (strain MW2)</name>
    <dbReference type="NCBI Taxonomy" id="196620"/>
    <lineage>
        <taxon>Bacteria</taxon>
        <taxon>Bacillati</taxon>
        <taxon>Bacillota</taxon>
        <taxon>Bacilli</taxon>
        <taxon>Bacillales</taxon>
        <taxon>Staphylococcaceae</taxon>
        <taxon>Staphylococcus</taxon>
    </lineage>
</organism>
<keyword id="KW-0963">Cytoplasm</keyword>
<keyword id="KW-0418">Kinase</keyword>
<keyword id="KW-0597">Phosphoprotein</keyword>
<keyword id="KW-0598">Phosphotransferase system</keyword>
<keyword id="KW-0762">Sugar transport</keyword>
<keyword id="KW-0808">Transferase</keyword>
<keyword id="KW-0813">Transport</keyword>
<sequence length="144" mass="15542">MSELFSNDNIFLNVNVNSQNEAIEKAGKALVDSGAVTDAYIQAMKDREQVVSTFMGNGLAIPHGTDEAKTNVIHSGLTLLQIPEGVDWDGEVVKVVVGIAGKDGEHLDLLSKIAITFSEEENVDRIVQAKSAEEIKQVFEEADA</sequence>
<reference key="1">
    <citation type="journal article" date="2002" name="Lancet">
        <title>Genome and virulence determinants of high virulence community-acquired MRSA.</title>
        <authorList>
            <person name="Baba T."/>
            <person name="Takeuchi F."/>
            <person name="Kuroda M."/>
            <person name="Yuzawa H."/>
            <person name="Aoki K."/>
            <person name="Oguchi A."/>
            <person name="Nagai Y."/>
            <person name="Iwama N."/>
            <person name="Asano K."/>
            <person name="Naimi T."/>
            <person name="Kuroda H."/>
            <person name="Cui L."/>
            <person name="Yamamoto K."/>
            <person name="Hiramatsu K."/>
        </authorList>
    </citation>
    <scope>NUCLEOTIDE SEQUENCE [LARGE SCALE GENOMIC DNA]</scope>
    <source>
        <strain>MW2</strain>
    </source>
</reference>
<evidence type="ECO:0000250" key="1"/>
<evidence type="ECO:0000250" key="2">
    <source>
        <dbReference type="UniProtKB" id="P00550"/>
    </source>
</evidence>
<evidence type="ECO:0000250" key="3">
    <source>
        <dbReference type="UniProtKB" id="P0A0E0"/>
    </source>
</evidence>
<evidence type="ECO:0000255" key="4">
    <source>
        <dbReference type="PROSITE-ProRule" id="PRU00417"/>
    </source>
</evidence>
<evidence type="ECO:0000305" key="5"/>
<name>PTMA_STAAW</name>
<comment type="function">
    <text evidence="3">The phosphoenolpyruvate-dependent sugar phosphotransferase system (sugar PTS), a major carbohydrate active transport system, catalyzes the phosphorylation of incoming sugar substrates concomitantly with their translocation across the cell membrane. The enzyme II CmtAB PTS system is involved in D-mannitol transport.</text>
</comment>
<comment type="subunit">
    <text evidence="3">Homodimer or homotrimer. Seems to be a monomer when not phosphorylated.</text>
</comment>
<comment type="subcellular location">
    <subcellularLocation>
        <location evidence="5">Cytoplasm</location>
    </subcellularLocation>
</comment>
<comment type="domain">
    <text evidence="4">The PTS EIIA type-2 domain is phosphorylated by phospho-HPr on a histidyl residue. Then, it transfers the phosphoryl group to the PTS EIIB type-2 domain.</text>
</comment>